<accession>Q86QT3</accession>
<accession>Q9GQ92</accession>
<comment type="function">
    <text evidence="1 3 4 6 8 9 10">Blocks human and rat Kv11.1/KCNH2/ERG1 and Kv11.3/KCNH7/ERG3, as well as rat (but not human) Kv11.2/KCNH6/ERG2 (PubMed:11755529, PubMed:11864985, PubMed:16497878, PubMed:17369411, PubMed:20600425) by binding to channel outer vestibule (S5P domain) with a 1:1 stoichiometry (PubMed:11755529, PubMed:11864985, PubMed:17369411, PubMed:20600425). Inhibition data are the following: hERG1 (reversible, IC(50)~7 nM) (PubMed:11755529, PubMed:11864985, PubMed:16497878, PubMed:17369411, PubMed:20600425), rERG1 (reversible, Kd=6.8 nM) (PubMed:16497878), rERG2 (irreversible, Kd=2.8 nM) (PubMed:16497878), hERG3 (irreversible, Kd=4.05 nM) (PubMed:16497878) and rERG3 (reversible, Kd=38.1 nM) (PubMed:16497878) potassium channels. The toxin potency is not affected by elevating potassium ion concentration from 2 to 98 mM (PubMed:11864985). This toxin only blocks channels in a closed state (PubMed:12860380). At high toxin concentrations, block of Kv11.1/KCNH2/ERG1 macroscopic current is incomplete (93.5%). This suggests a kinetic mechanism model with two different states of toxin-channel binding (T+C=TC*=TC; in the TC* state, the toxin binds the channel but does not occlude the pore, whereas in the TC state the toxin binds and occludes the pore). In this model, incomplete block is explained by the relatively fast dissociation rate from the blocked channel conformation (TC) relative to the rate of conversion of the toxin-channel encounter complex (TC*) to the blocked channel conformation (TC) (PubMed:17369411).</text>
</comment>
<comment type="subcellular location">
    <subcellularLocation>
        <location evidence="1">Secreted</location>
    </subcellularLocation>
</comment>
<comment type="tissue specificity">
    <text evidence="14">Expressed by the venom gland.</text>
</comment>
<comment type="domain">
    <text>The presence of a 'disulfide through disulfide knot' structurally defines this protein as a knottin.</text>
</comment>
<comment type="domain">
    <text evidence="5 7">Has the CSalpha/beta fold, which comprises one or two short alpha helices connected to anti-parallel beta-sheets stabilized by three or four disulfide bonds.</text>
</comment>
<comment type="PTM">
    <text evidence="10">After protein storage at -20 Celsius degrees during a couple of months, the Met-55 of a small number of toxins is naturally oxidized. This oxidized form is about three orders of magnitude less efficient (IC(50)=15 uM) than non-oxidized form.</text>
</comment>
<comment type="mass spectrometry"/>
<comment type="miscellaneous">
    <text evidence="9">The affinity of the toxin for the channel decreases as temperature increases (Kd=7.3 nM and Kd=64 nM at 22 and 37 degrees Celsius, respectively), likely due to changes in the structure of the channel binding site.</text>
</comment>
<comment type="miscellaneous">
    <text evidence="3 4 8">Negative results: does not affect the function of either mouse EAG/KCNH1 or ELK1 channels at concentration of 200 nM (PubMed:11755529). Does not inhibit hKv1.4/KCNA4, hKv4.3/KCND3, hKv2.1/KCNB1 and rKv7.1/KCNQ1 potassium channels at concentration of 50 nM (PubMed:11864985). Does not inhibit human Kv11.2/KCNH6/ERG2 (PubMed:16497878).</text>
</comment>
<comment type="similarity">
    <text evidence="14">Belongs to the ergtoxin family. Gamma-KTx 1 subfamily.</text>
</comment>
<dbReference type="EMBL" id="AY164271">
    <property type="protein sequence ID" value="AAO22234.1"/>
    <property type="molecule type" value="mRNA"/>
</dbReference>
<dbReference type="EMBL" id="AF288205">
    <property type="protein sequence ID" value="AAG38523.1"/>
    <property type="molecule type" value="mRNA"/>
</dbReference>
<dbReference type="PDB" id="1NE5">
    <property type="method" value="NMR"/>
    <property type="chains" value="A=21-62"/>
</dbReference>
<dbReference type="PDB" id="1PX9">
    <property type="method" value="NMR"/>
    <property type="chains" value="A=21-62"/>
</dbReference>
<dbReference type="PDBsum" id="1NE5"/>
<dbReference type="PDBsum" id="1PX9"/>
<dbReference type="SMR" id="Q86QT3"/>
<dbReference type="EvolutionaryTrace" id="Q86QT3"/>
<dbReference type="GO" id="GO:0005576">
    <property type="term" value="C:extracellular region"/>
    <property type="evidence" value="ECO:0007669"/>
    <property type="project" value="UniProtKB-SubCell"/>
</dbReference>
<dbReference type="GO" id="GO:0019870">
    <property type="term" value="F:potassium channel inhibitor activity"/>
    <property type="evidence" value="ECO:0007669"/>
    <property type="project" value="InterPro"/>
</dbReference>
<dbReference type="GO" id="GO:0090729">
    <property type="term" value="F:toxin activity"/>
    <property type="evidence" value="ECO:0007669"/>
    <property type="project" value="UniProtKB-KW"/>
</dbReference>
<dbReference type="Gene3D" id="3.30.30.10">
    <property type="entry name" value="Knottin, scorpion toxin-like"/>
    <property type="match status" value="1"/>
</dbReference>
<dbReference type="InterPro" id="IPR012622">
    <property type="entry name" value="Ergtoxin"/>
</dbReference>
<dbReference type="InterPro" id="IPR036574">
    <property type="entry name" value="Scorpion_toxin-like_sf"/>
</dbReference>
<dbReference type="Pfam" id="PF08086">
    <property type="entry name" value="Toxin_17"/>
    <property type="match status" value="1"/>
</dbReference>
<dbReference type="SUPFAM" id="SSF57095">
    <property type="entry name" value="Scorpion toxin-like"/>
    <property type="match status" value="1"/>
</dbReference>
<dbReference type="PROSITE" id="PS60026">
    <property type="entry name" value="ERGTX"/>
    <property type="match status" value="1"/>
</dbReference>
<feature type="signal peptide" evidence="1">
    <location>
        <begin position="1"/>
        <end position="20"/>
    </location>
</feature>
<feature type="chain" id="PRO_0000035362" description="Potassium channel toxin gamma-KTx 1.1">
    <location>
        <begin position="21"/>
        <end position="62"/>
    </location>
</feature>
<feature type="site" description="May represent the binding site" evidence="15">
    <location>
        <position position="33"/>
    </location>
</feature>
<feature type="site" description="Key residue on the interacting surface with the channel" evidence="16">
    <location>
        <position position="55"/>
    </location>
</feature>
<feature type="disulfide bond" evidence="5 7">
    <location>
        <begin position="25"/>
        <end position="43"/>
    </location>
</feature>
<feature type="disulfide bond" evidence="5 7">
    <location>
        <begin position="31"/>
        <end position="54"/>
    </location>
</feature>
<feature type="disulfide bond" evidence="5 7">
    <location>
        <begin position="40"/>
        <end position="59"/>
    </location>
</feature>
<feature type="disulfide bond" evidence="5 7">
    <location>
        <begin position="44"/>
        <end position="61"/>
    </location>
</feature>
<feature type="mutagenesis site" description="6-fold reduction in affinity for Kv11.1/KCNH2/ERG1 potassium channel (Kd=72.9 nM)." evidence="11">
    <original>Q</original>
    <variation>A</variation>
    <location>
        <position position="38"/>
    </location>
</feature>
<feature type="mutagenesis site" description="30-fold reduction in affinity for Kv11.1/KCNH2/ERG1 potassium channel (Kd=303.4 nM)." evidence="10">
    <original>M</original>
    <variation>A</variation>
    <location>
        <position position="55"/>
    </location>
</feature>
<feature type="mutagenesis site" description="No change in affinity for Kv11.1/KCNH2/ERG1 potassium channel (Kd=14.2 nM)." evidence="11">
    <original>A</original>
    <variation>T</variation>
    <location>
        <position position="62"/>
    </location>
</feature>
<feature type="helix" evidence="17">
    <location>
        <begin position="25"/>
        <end position="27"/>
    </location>
</feature>
<feature type="strand" evidence="17">
    <location>
        <begin position="33"/>
        <end position="35"/>
    </location>
</feature>
<feature type="helix" evidence="17">
    <location>
        <begin position="38"/>
        <end position="47"/>
    </location>
</feature>
<feature type="strand" evidence="17">
    <location>
        <begin position="48"/>
        <end position="50"/>
    </location>
</feature>
<feature type="strand" evidence="17">
    <location>
        <begin position="52"/>
        <end position="57"/>
    </location>
</feature>
<feature type="strand" evidence="17">
    <location>
        <begin position="59"/>
        <end position="61"/>
    </location>
</feature>
<keyword id="KW-0002">3D-structure</keyword>
<keyword id="KW-0903">Direct protein sequencing</keyword>
<keyword id="KW-1015">Disulfide bond</keyword>
<keyword id="KW-0872">Ion channel impairing toxin</keyword>
<keyword id="KW-0960">Knottin</keyword>
<keyword id="KW-0528">Neurotoxin</keyword>
<keyword id="KW-0632">Potassium channel impairing toxin</keyword>
<keyword id="KW-0964">Secreted</keyword>
<keyword id="KW-0732">Signal</keyword>
<keyword id="KW-0800">Toxin</keyword>
<keyword id="KW-1220">Voltage-gated potassium channel impairing toxin</keyword>
<evidence type="ECO:0000269" key="1">
    <source>
    </source>
</evidence>
<evidence type="ECO:0000269" key="2">
    <source>
    </source>
</evidence>
<evidence type="ECO:0000269" key="3">
    <source>
    </source>
</evidence>
<evidence type="ECO:0000269" key="4">
    <source>
    </source>
</evidence>
<evidence type="ECO:0000269" key="5">
    <source>
    </source>
</evidence>
<evidence type="ECO:0000269" key="6">
    <source>
    </source>
</evidence>
<evidence type="ECO:0000269" key="7">
    <source>
    </source>
</evidence>
<evidence type="ECO:0000269" key="8">
    <source>
    </source>
</evidence>
<evidence type="ECO:0000269" key="9">
    <source>
    </source>
</evidence>
<evidence type="ECO:0000269" key="10">
    <source>
    </source>
</evidence>
<evidence type="ECO:0000269" key="11">
    <source>
    </source>
</evidence>
<evidence type="ECO:0000303" key="12">
    <source>
    </source>
</evidence>
<evidence type="ECO:0000303" key="13">
    <source>
    </source>
</evidence>
<evidence type="ECO:0000305" key="14"/>
<evidence type="ECO:0000305" key="15">
    <source>
    </source>
</evidence>
<evidence type="ECO:0000305" key="16">
    <source>
    </source>
</evidence>
<evidence type="ECO:0007829" key="17">
    <source>
        <dbReference type="PDB" id="1NE5"/>
    </source>
</evidence>
<name>KGX11_CENNO</name>
<reference key="1">
    <citation type="journal article" date="2002" name="FEBS Lett.">
        <title>A large number of novel Ergtoxin-like genes and ERG K+-channels blocking peptides from scorpions of the genus Centruroides.</title>
        <authorList>
            <person name="Corona M."/>
            <person name="Gurrola G.B."/>
            <person name="Merino E."/>
            <person name="Cassulini R.R."/>
            <person name="Valdez-Cruz N.A."/>
            <person name="Garcia B."/>
            <person name="Ramirez-Dominguez M.E."/>
            <person name="Coronas F.I."/>
            <person name="Zamudio F.Z."/>
            <person name="Wanke E."/>
            <person name="Possani L.D."/>
        </authorList>
    </citation>
    <scope>NUCLEOTIDE SEQUENCE [MRNA]</scope>
    <scope>PROTEIN SEQUENCE OF 21-62</scope>
    <scope>NOMENCLATURE</scope>
    <source>
        <tissue>Venom gland</tissue>
    </source>
</reference>
<reference key="2">
    <citation type="journal article" date="1999" name="FASEB J.">
        <title>A toxin to nervous, cardiac, and endocrine ERG K+ channels isolated from Centruroides noxius scorpion venom.</title>
        <authorList>
            <person name="Gurrola G.B."/>
            <person name="Rosati B."/>
            <person name="Rocchetti M."/>
            <person name="Pimienta G."/>
            <person name="Zaza A."/>
            <person name="Arcangeli A."/>
            <person name="Olivotto M."/>
            <person name="Possani L.D."/>
            <person name="Wanke E."/>
        </authorList>
    </citation>
    <scope>PROTEIN SEQUENCE OF 21-62</scope>
    <scope>FUNCTION</scope>
    <scope>SUBCELLULAR LOCATION</scope>
    <source>
        <tissue>Venom</tissue>
    </source>
</reference>
<reference key="3">
    <citation type="journal article" date="2000" name="FEBS Lett.">
        <title>Disulfide bridges of ergtoxin, a member of a new sub-family of peptide blockers of the ether-a-go-go-related K+ channel.</title>
        <authorList>
            <person name="Scaloni A."/>
            <person name="Bottiglieri C."/>
            <person name="Ferrara L."/>
            <person name="Corona M."/>
            <person name="Gurrola G.B."/>
            <person name="Batista C.V.F."/>
            <person name="Wanke E."/>
            <person name="Possani L.D."/>
        </authorList>
    </citation>
    <scope>SEQUENCE REVISION TO 54 AND 61-62</scope>
    <scope>MASS SPECTROMETRY</scope>
</reference>
<reference key="4">
    <citation type="journal article" date="2000" name="FEBS Lett.">
        <authorList>
            <person name="Scaloni A."/>
            <person name="Bottiglieri C."/>
            <person name="Ferrara L."/>
            <person name="Corona M."/>
            <person name="Gurrola G.B."/>
            <person name="Batista C.V.F."/>
            <person name="Wanke E."/>
            <person name="Possani L.D."/>
        </authorList>
    </citation>
    <scope>ERRATUM OF PUBMED:11023354</scope>
</reference>
<reference key="5">
    <citation type="journal article" date="2002" name="FEBS Lett.">
        <title>Mapping the receptor site for ergtoxin, a specific blocker of ERG channels.</title>
        <authorList>
            <person name="Pardo-Lopez L."/>
            <person name="Garcia-Valdes J."/>
            <person name="Gurrola G.B."/>
            <person name="Robertson G.A."/>
            <person name="Possani L.D."/>
        </authorList>
    </citation>
    <scope>FUNCTION</scope>
</reference>
<reference key="6">
    <citation type="journal article" date="2002" name="J. Biol. Chem.">
        <title>Mapping the binding site of a human ether-a-go-go-related gene-specific peptide toxin (ErgTx) to the channel's outer vestibule.</title>
        <authorList>
            <person name="Pardo-Lopez L."/>
            <person name="Zhang M."/>
            <person name="Liu J."/>
            <person name="Jiang M."/>
            <person name="Possani L.D."/>
            <person name="Tseng G.N."/>
        </authorList>
    </citation>
    <scope>FUNCTION</scope>
</reference>
<reference key="7">
    <citation type="journal article" date="2003" name="FEBS Lett.">
        <title>Preferential closed channel blockade of HERG potassium currents by chemically synthesised BeKm-1 scorpion toxin.</title>
        <authorList>
            <person name="Milnes J.T."/>
            <person name="Dempsey C.E."/>
            <person name="Ridley J.M."/>
            <person name="Crociani O."/>
            <person name="Arcangeli A."/>
            <person name="Hancox J.C."/>
            <person name="Witchel H.J."/>
        </authorList>
    </citation>
    <scope>FUNCTION</scope>
</reference>
<reference key="8">
    <citation type="journal article" date="2006" name="Mol. Pharmacol.">
        <title>Species diversity and peptide toxins blocking selectivity of ether-a-go-go-related gene subfamily K+ channels in the central nervous system.</title>
        <authorList>
            <person name="Restano-Cassulini R."/>
            <person name="Korolkova Y.V."/>
            <person name="Diochot S."/>
            <person name="Gurrola G."/>
            <person name="Guasti L."/>
            <person name="Possani L.D."/>
            <person name="Lazdunski M."/>
            <person name="Grishin E.V."/>
            <person name="Arcangeli A."/>
            <person name="Wanke E."/>
        </authorList>
    </citation>
    <scope>FUNCTION</scope>
</reference>
<reference key="9">
    <citation type="journal article" date="2007" name="Biophys. J.">
        <title>Mechanism of block of the hERG K+ channel by the scorpion toxin CnErg1.</title>
        <authorList>
            <person name="Hill A.P."/>
            <person name="Sunde M."/>
            <person name="Campbell T.J."/>
            <person name="Vandenberg J.I."/>
        </authorList>
    </citation>
    <scope>FUNCTION</scope>
    <scope>SYNTHESIS OF 21-62</scope>
</reference>
<reference key="10">
    <citation type="journal article" date="2011" name="Peptides">
        <title>Recombinant expression of the toxic peptide ErgTx1 and role of Met35 on its stability and function.</title>
        <authorList>
            <person name="Jimenez-Vargas J.M."/>
            <person name="Restano-Cassulini R."/>
            <person name="Quintero-Hernandez V."/>
            <person name="Gurrola G.B."/>
            <person name="Possani L.D."/>
        </authorList>
    </citation>
    <scope>MUTAGENESIS OF MET-55</scope>
    <scope>FUNCTION</scope>
    <source>
        <tissue>Venom</tissue>
    </source>
</reference>
<reference key="11">
    <citation type="journal article" date="2012" name="Biochem. Biophys. Res. Commun.">
        <title>Positive selection-guided mutational analysis revealing two key functional sites of scorpion ERG K(+) channel toxins.</title>
        <authorList>
            <person name="Wang X."/>
            <person name="Jimenez-Vargas J.M."/>
            <person name="Xu C."/>
            <person name="Possani L.D."/>
            <person name="Zhu S."/>
        </authorList>
    </citation>
    <scope>MUTAGENESIS OF GLN-38 AND ALA-62</scope>
</reference>
<reference key="12">
    <citation type="journal article" date="2003" name="FEBS Lett.">
        <title>Solution structure of CnErg1 (Ergtoxin), a HERG specific scorpion toxin.</title>
        <authorList>
            <person name="Torres A.M."/>
            <person name="Bansal P."/>
            <person name="Alewood P.F."/>
            <person name="Bursill J.A."/>
            <person name="Kuchel P.W."/>
            <person name="Vandenberg J.I."/>
        </authorList>
    </citation>
    <scope>STRUCTURE BY NMR OF 21-62</scope>
    <scope>DISULFIDE BONDS</scope>
    <scope>BINDING SITE LYS33</scope>
    <scope>SYNTHESIS OF 21-62</scope>
</reference>
<reference key="13">
    <citation type="journal article" date="2004" name="Proteins">
        <title>Exploring structural features of the interaction between the scorpion toxinCnErg1 and ERG K+ channels.</title>
        <authorList>
            <person name="Frenal K."/>
            <person name="Xu C.Q."/>
            <person name="Wolff N."/>
            <person name="Wecker K."/>
            <person name="Gurrola G.B."/>
            <person name="Zhu S.-Y."/>
            <person name="Chi C.W."/>
            <person name="Possani L.D."/>
            <person name="Tytgat J."/>
            <person name="Delepierre M."/>
        </authorList>
    </citation>
    <scope>STRUCTURE BY NMR OF 21-62</scope>
    <scope>DISULFIDE BONDS</scope>
</reference>
<proteinExistence type="evidence at protein level"/>
<organism>
    <name type="scientific">Centruroides noxius</name>
    <name type="common">Mexican scorpion</name>
    <dbReference type="NCBI Taxonomy" id="6878"/>
    <lineage>
        <taxon>Eukaryota</taxon>
        <taxon>Metazoa</taxon>
        <taxon>Ecdysozoa</taxon>
        <taxon>Arthropoda</taxon>
        <taxon>Chelicerata</taxon>
        <taxon>Arachnida</taxon>
        <taxon>Scorpiones</taxon>
        <taxon>Buthida</taxon>
        <taxon>Buthoidea</taxon>
        <taxon>Buthidae</taxon>
        <taxon>Centruroides</taxon>
    </lineage>
</organism>
<sequence>MKVLILIMIIASLMIMGVEMDRDSCVDKSRCAKYGYYQECQDCCKNAGHNGGTCMFFKCKCA</sequence>
<protein>
    <recommendedName>
        <fullName evidence="13">Potassium channel toxin gamma-KTx 1.1</fullName>
    </recommendedName>
    <alternativeName>
        <fullName evidence="12">Ergtoxin</fullName>
        <shortName evidence="13">CnErg1</shortName>
        <shortName evidence="13">CnErgTx1</shortName>
        <shortName evidence="12">ErgTx</shortName>
        <shortName evidence="13">ErgTx1</shortName>
    </alternativeName>
</protein>